<sequence length="320" mass="36738">MAVYTSVSDEEVSSFLDLYPDSGRLLSIKGITEGVENSNYLITTDVRSYILTLYEKRVNPEELPFFMALTDHLAAENLPVPKAWKSRDGKQIQTLAGRPACLIEFLQGRWTPTPNAEQTRATGEMLGKMHKSLTHFSENRKNSLDLENWHILAEKCGFEAMNQIEAHMGDEVKKELDYLDKFWPKDLPRSVIHADLFPDNVLFEGDSLKGVIDFYFACTEVRAWDLAITYSAWCFDQEDHFLADHAKALIKGYHQSFALTEEERAAFIVLLRGAALRFLLTRAWDWVNTPPDALVVPKDPRDFFKRLRFYREASLESLGF</sequence>
<feature type="chain" id="PRO_0000172199" description="Homoserine kinase">
    <location>
        <begin position="1"/>
        <end position="320"/>
    </location>
</feature>
<feature type="sequence conflict" description="In Ref. 1; AAC70365." evidence="2" ref="1">
    <original>RWTPTPNAEQTRATGEMLG</original>
    <variation>VGRPPLMRNRPVLPVKCWV</variation>
    <location>
        <begin position="109"/>
        <end position="127"/>
    </location>
</feature>
<evidence type="ECO:0000255" key="1">
    <source>
        <dbReference type="HAMAP-Rule" id="MF_00301"/>
    </source>
</evidence>
<evidence type="ECO:0000305" key="2"/>
<comment type="catalytic activity">
    <reaction evidence="1">
        <text>L-homoserine + ATP = O-phospho-L-homoserine + ADP + H(+)</text>
        <dbReference type="Rhea" id="RHEA:13985"/>
        <dbReference type="ChEBI" id="CHEBI:15378"/>
        <dbReference type="ChEBI" id="CHEBI:30616"/>
        <dbReference type="ChEBI" id="CHEBI:57476"/>
        <dbReference type="ChEBI" id="CHEBI:57590"/>
        <dbReference type="ChEBI" id="CHEBI:456216"/>
        <dbReference type="EC" id="2.7.1.39"/>
    </reaction>
</comment>
<comment type="pathway">
    <text evidence="1">Amino-acid biosynthesis; L-threonine biosynthesis; L-threonine from L-aspartate: step 4/5.</text>
</comment>
<comment type="similarity">
    <text evidence="1">Belongs to the pseudomonas-type ThrB family.</text>
</comment>
<organism>
    <name type="scientific">Zymomonas mobilis subsp. mobilis (strain ATCC 31821 / ZM4 / CP4)</name>
    <dbReference type="NCBI Taxonomy" id="264203"/>
    <lineage>
        <taxon>Bacteria</taxon>
        <taxon>Pseudomonadati</taxon>
        <taxon>Pseudomonadota</taxon>
        <taxon>Alphaproteobacteria</taxon>
        <taxon>Sphingomonadales</taxon>
        <taxon>Zymomonadaceae</taxon>
        <taxon>Zymomonas</taxon>
    </lineage>
</organism>
<keyword id="KW-0028">Amino-acid biosynthesis</keyword>
<keyword id="KW-0067">ATP-binding</keyword>
<keyword id="KW-0418">Kinase</keyword>
<keyword id="KW-0547">Nucleotide-binding</keyword>
<keyword id="KW-1185">Reference proteome</keyword>
<keyword id="KW-0791">Threonine biosynthesis</keyword>
<keyword id="KW-0808">Transferase</keyword>
<dbReference type="EC" id="2.7.1.39" evidence="1"/>
<dbReference type="EMBL" id="AF086791">
    <property type="protein sequence ID" value="AAC70365.1"/>
    <property type="molecule type" value="Genomic_DNA"/>
</dbReference>
<dbReference type="EMBL" id="AE008692">
    <property type="protein sequence ID" value="AAV90224.1"/>
    <property type="molecule type" value="Genomic_DNA"/>
</dbReference>
<dbReference type="PIR" id="T33726">
    <property type="entry name" value="T33726"/>
</dbReference>
<dbReference type="RefSeq" id="WP_011241354.1">
    <property type="nucleotide sequence ID" value="NZ_CP035711.1"/>
</dbReference>
<dbReference type="SMR" id="O69015"/>
<dbReference type="STRING" id="264203.ZMO1600"/>
<dbReference type="KEGG" id="zmo:ZMO1600"/>
<dbReference type="eggNOG" id="COG2334">
    <property type="taxonomic scope" value="Bacteria"/>
</dbReference>
<dbReference type="HOGENOM" id="CLU_053300_1_0_5"/>
<dbReference type="UniPathway" id="UPA00050">
    <property type="reaction ID" value="UER00064"/>
</dbReference>
<dbReference type="Proteomes" id="UP000001173">
    <property type="component" value="Chromosome"/>
</dbReference>
<dbReference type="GO" id="GO:0005524">
    <property type="term" value="F:ATP binding"/>
    <property type="evidence" value="ECO:0007669"/>
    <property type="project" value="UniProtKB-KW"/>
</dbReference>
<dbReference type="GO" id="GO:0004413">
    <property type="term" value="F:homoserine kinase activity"/>
    <property type="evidence" value="ECO:0007669"/>
    <property type="project" value="UniProtKB-UniRule"/>
</dbReference>
<dbReference type="GO" id="GO:0009088">
    <property type="term" value="P:threonine biosynthetic process"/>
    <property type="evidence" value="ECO:0007669"/>
    <property type="project" value="UniProtKB-UniRule"/>
</dbReference>
<dbReference type="CDD" id="cd05153">
    <property type="entry name" value="HomoserineK_II"/>
    <property type="match status" value="1"/>
</dbReference>
<dbReference type="Gene3D" id="3.90.1200.10">
    <property type="match status" value="1"/>
</dbReference>
<dbReference type="Gene3D" id="3.30.200.20">
    <property type="entry name" value="Phosphorylase Kinase, domain 1"/>
    <property type="match status" value="1"/>
</dbReference>
<dbReference type="HAMAP" id="MF_00301">
    <property type="entry name" value="Homoser_kinase_2"/>
    <property type="match status" value="1"/>
</dbReference>
<dbReference type="InterPro" id="IPR002575">
    <property type="entry name" value="Aminoglycoside_PTrfase"/>
</dbReference>
<dbReference type="InterPro" id="IPR005280">
    <property type="entry name" value="Homoserine_kinase_II"/>
</dbReference>
<dbReference type="InterPro" id="IPR011009">
    <property type="entry name" value="Kinase-like_dom_sf"/>
</dbReference>
<dbReference type="InterPro" id="IPR050249">
    <property type="entry name" value="Pseudomonas-type_ThrB"/>
</dbReference>
<dbReference type="NCBIfam" id="NF003558">
    <property type="entry name" value="PRK05231.1"/>
    <property type="match status" value="1"/>
</dbReference>
<dbReference type="NCBIfam" id="TIGR00938">
    <property type="entry name" value="thrB_alt"/>
    <property type="match status" value="1"/>
</dbReference>
<dbReference type="PANTHER" id="PTHR21064:SF6">
    <property type="entry name" value="AMINOGLYCOSIDE PHOSPHOTRANSFERASE DOMAIN-CONTAINING PROTEIN"/>
    <property type="match status" value="1"/>
</dbReference>
<dbReference type="PANTHER" id="PTHR21064">
    <property type="entry name" value="AMINOGLYCOSIDE PHOSPHOTRANSFERASE DOMAIN-CONTAINING PROTEIN-RELATED"/>
    <property type="match status" value="1"/>
</dbReference>
<dbReference type="Pfam" id="PF01636">
    <property type="entry name" value="APH"/>
    <property type="match status" value="1"/>
</dbReference>
<dbReference type="SUPFAM" id="SSF56112">
    <property type="entry name" value="Protein kinase-like (PK-like)"/>
    <property type="match status" value="1"/>
</dbReference>
<proteinExistence type="inferred from homology"/>
<protein>
    <recommendedName>
        <fullName evidence="1">Homoserine kinase</fullName>
        <shortName evidence="1">HK</shortName>
        <shortName evidence="1">HSK</shortName>
        <ecNumber evidence="1">2.7.1.39</ecNumber>
    </recommendedName>
</protein>
<gene>
    <name evidence="1" type="primary">thrB</name>
    <name type="ordered locus">ZMO1600</name>
</gene>
<accession>O69015</accession>
<accession>Q5NM36</accession>
<reference key="1">
    <citation type="submission" date="1998-04" db="EMBL/GenBank/DDBJ databases">
        <authorList>
            <person name="Lee J."/>
            <person name="Jin S."/>
            <person name="Kang H.S."/>
        </authorList>
    </citation>
    <scope>NUCLEOTIDE SEQUENCE [GENOMIC DNA]</scope>
    <source>
        <strain>ATCC 31821 / ZM4 / CP4</strain>
    </source>
</reference>
<reference key="2">
    <citation type="journal article" date="2005" name="Nat. Biotechnol.">
        <title>The genome sequence of the ethanologenic bacterium Zymomonas mobilis ZM4.</title>
        <authorList>
            <person name="Seo J.-S."/>
            <person name="Chong H."/>
            <person name="Park H.S."/>
            <person name="Yoon K.-O."/>
            <person name="Jung C."/>
            <person name="Kim J.J."/>
            <person name="Hong J.H."/>
            <person name="Kim H."/>
            <person name="Kim J.-H."/>
            <person name="Kil J.-I."/>
            <person name="Park C.J."/>
            <person name="Oh H.-M."/>
            <person name="Lee J.-S."/>
            <person name="Jin S.-J."/>
            <person name="Um H.-W."/>
            <person name="Lee H.-J."/>
            <person name="Oh S.-J."/>
            <person name="Kim J.Y."/>
            <person name="Kang H.L."/>
            <person name="Lee S.Y."/>
            <person name="Lee K.J."/>
            <person name="Kang H.S."/>
        </authorList>
    </citation>
    <scope>NUCLEOTIDE SEQUENCE [LARGE SCALE GENOMIC DNA]</scope>
    <source>
        <strain>ATCC 31821 / ZM4 / CP4</strain>
    </source>
</reference>
<name>KHSE_ZYMMO</name>